<proteinExistence type="inferred from homology"/>
<feature type="signal peptide" evidence="1">
    <location>
        <begin position="1"/>
        <end position="21"/>
    </location>
</feature>
<feature type="chain" id="PRO_1000078256" description="Outer-membrane lipoprotein LolB">
    <location>
        <begin position="22"/>
        <end position="207"/>
    </location>
</feature>
<feature type="lipid moiety-binding region" description="N-palmitoyl cysteine" evidence="1">
    <location>
        <position position="22"/>
    </location>
</feature>
<feature type="lipid moiety-binding region" description="S-diacylglycerol cysteine" evidence="1">
    <location>
        <position position="22"/>
    </location>
</feature>
<sequence>MTLPDFRLIRLLPLASLVLTACTLPVHKEPGKSPDSPQWRQHQQEVRNLNQYQTRGAFAYISDDQKVYARFFWQQTGQDRYRLLLTNPLGSTELELNAQPGNVQLVDNKGQRYTADDAEEMIGKLTGMPIPLNSLRQWILGLPGDATDYKLDDQYRLSEVNYRQDGKNWKVVYGGYDSKTQPAMPANMELSDGSQRIKLKMDNWIVK</sequence>
<accession>A9MP99</accession>
<reference key="1">
    <citation type="submission" date="2007-11" db="EMBL/GenBank/DDBJ databases">
        <authorList>
            <consortium name="The Salmonella enterica serovar Arizonae Genome Sequencing Project"/>
            <person name="McClelland M."/>
            <person name="Sanderson E.K."/>
            <person name="Porwollik S."/>
            <person name="Spieth J."/>
            <person name="Clifton W.S."/>
            <person name="Fulton R."/>
            <person name="Chunyan W."/>
            <person name="Wollam A."/>
            <person name="Shah N."/>
            <person name="Pepin K."/>
            <person name="Bhonagiri V."/>
            <person name="Nash W."/>
            <person name="Johnson M."/>
            <person name="Thiruvilangam P."/>
            <person name="Wilson R."/>
        </authorList>
    </citation>
    <scope>NUCLEOTIDE SEQUENCE [LARGE SCALE GENOMIC DNA]</scope>
    <source>
        <strain>ATCC BAA-731 / CDC346-86 / RSK2980</strain>
    </source>
</reference>
<protein>
    <recommendedName>
        <fullName evidence="1">Outer-membrane lipoprotein LolB</fullName>
    </recommendedName>
</protein>
<name>LOLB_SALAR</name>
<gene>
    <name evidence="1" type="primary">lolB</name>
    <name type="ordered locus">SARI_01175</name>
</gene>
<comment type="function">
    <text evidence="1">Plays a critical role in the incorporation of lipoproteins in the outer membrane after they are released by the LolA protein.</text>
</comment>
<comment type="subunit">
    <text evidence="1">Monomer.</text>
</comment>
<comment type="subcellular location">
    <subcellularLocation>
        <location evidence="1">Cell outer membrane</location>
        <topology evidence="1">Lipid-anchor</topology>
    </subcellularLocation>
</comment>
<comment type="similarity">
    <text evidence="1">Belongs to the LolB family.</text>
</comment>
<dbReference type="EMBL" id="CP000880">
    <property type="protein sequence ID" value="ABX21080.1"/>
    <property type="molecule type" value="Genomic_DNA"/>
</dbReference>
<dbReference type="SMR" id="A9MP99"/>
<dbReference type="STRING" id="41514.SARI_01175"/>
<dbReference type="KEGG" id="ses:SARI_01175"/>
<dbReference type="HOGENOM" id="CLU_092816_1_1_6"/>
<dbReference type="Proteomes" id="UP000002084">
    <property type="component" value="Chromosome"/>
</dbReference>
<dbReference type="GO" id="GO:0009279">
    <property type="term" value="C:cell outer membrane"/>
    <property type="evidence" value="ECO:0007669"/>
    <property type="project" value="UniProtKB-SubCell"/>
</dbReference>
<dbReference type="GO" id="GO:0044874">
    <property type="term" value="P:lipoprotein localization to outer membrane"/>
    <property type="evidence" value="ECO:0007669"/>
    <property type="project" value="UniProtKB-UniRule"/>
</dbReference>
<dbReference type="GO" id="GO:0015031">
    <property type="term" value="P:protein transport"/>
    <property type="evidence" value="ECO:0007669"/>
    <property type="project" value="UniProtKB-KW"/>
</dbReference>
<dbReference type="CDD" id="cd16326">
    <property type="entry name" value="LolB"/>
    <property type="match status" value="1"/>
</dbReference>
<dbReference type="FunFam" id="2.50.20.10:FF:000002">
    <property type="entry name" value="Outer-membrane lipoprotein LolB"/>
    <property type="match status" value="1"/>
</dbReference>
<dbReference type="Gene3D" id="2.50.20.10">
    <property type="entry name" value="Lipoprotein localisation LolA/LolB/LppX"/>
    <property type="match status" value="1"/>
</dbReference>
<dbReference type="HAMAP" id="MF_00233">
    <property type="entry name" value="LolB"/>
    <property type="match status" value="1"/>
</dbReference>
<dbReference type="InterPro" id="IPR029046">
    <property type="entry name" value="LolA/LolB/LppX"/>
</dbReference>
<dbReference type="InterPro" id="IPR004565">
    <property type="entry name" value="OM_lipoprot_LolB"/>
</dbReference>
<dbReference type="NCBIfam" id="TIGR00548">
    <property type="entry name" value="lolB"/>
    <property type="match status" value="1"/>
</dbReference>
<dbReference type="Pfam" id="PF03550">
    <property type="entry name" value="LolB"/>
    <property type="match status" value="1"/>
</dbReference>
<dbReference type="SUPFAM" id="SSF89392">
    <property type="entry name" value="Prokaryotic lipoproteins and lipoprotein localization factors"/>
    <property type="match status" value="1"/>
</dbReference>
<dbReference type="PROSITE" id="PS51257">
    <property type="entry name" value="PROKAR_LIPOPROTEIN"/>
    <property type="match status" value="1"/>
</dbReference>
<evidence type="ECO:0000255" key="1">
    <source>
        <dbReference type="HAMAP-Rule" id="MF_00233"/>
    </source>
</evidence>
<keyword id="KW-0998">Cell outer membrane</keyword>
<keyword id="KW-0143">Chaperone</keyword>
<keyword id="KW-0449">Lipoprotein</keyword>
<keyword id="KW-0472">Membrane</keyword>
<keyword id="KW-0564">Palmitate</keyword>
<keyword id="KW-0653">Protein transport</keyword>
<keyword id="KW-1185">Reference proteome</keyword>
<keyword id="KW-0732">Signal</keyword>
<keyword id="KW-0813">Transport</keyword>
<organism>
    <name type="scientific">Salmonella arizonae (strain ATCC BAA-731 / CDC346-86 / RSK2980)</name>
    <dbReference type="NCBI Taxonomy" id="41514"/>
    <lineage>
        <taxon>Bacteria</taxon>
        <taxon>Pseudomonadati</taxon>
        <taxon>Pseudomonadota</taxon>
        <taxon>Gammaproteobacteria</taxon>
        <taxon>Enterobacterales</taxon>
        <taxon>Enterobacteriaceae</taxon>
        <taxon>Salmonella</taxon>
    </lineage>
</organism>